<gene>
    <name evidence="1" type="primary">psbJ</name>
</gene>
<accession>Q09G32</accession>
<proteinExistence type="inferred from homology"/>
<feature type="chain" id="PRO_0000292259" description="Photosystem II reaction center protein J">
    <location>
        <begin position="1"/>
        <end position="40"/>
    </location>
</feature>
<feature type="transmembrane region" description="Helical" evidence="1">
    <location>
        <begin position="8"/>
        <end position="28"/>
    </location>
</feature>
<sequence length="40" mass="4119">MADTTGRIPLWLIGTVTGIPVIGSIGIFFYGSYSGLGSSL</sequence>
<protein>
    <recommendedName>
        <fullName evidence="1">Photosystem II reaction center protein J</fullName>
        <shortName evidence="1">PSII-J</shortName>
    </recommendedName>
</protein>
<dbReference type="EMBL" id="DQ923116">
    <property type="protein sequence ID" value="ABI49792.1"/>
    <property type="molecule type" value="Genomic_DNA"/>
</dbReference>
<dbReference type="RefSeq" id="YP_740579.1">
    <property type="nucleotide sequence ID" value="NC_008335.1"/>
</dbReference>
<dbReference type="SMR" id="Q09G32"/>
<dbReference type="GeneID" id="4271304"/>
<dbReference type="GO" id="GO:0009535">
    <property type="term" value="C:chloroplast thylakoid membrane"/>
    <property type="evidence" value="ECO:0007669"/>
    <property type="project" value="UniProtKB-SubCell"/>
</dbReference>
<dbReference type="GO" id="GO:0009539">
    <property type="term" value="C:photosystem II reaction center"/>
    <property type="evidence" value="ECO:0007669"/>
    <property type="project" value="InterPro"/>
</dbReference>
<dbReference type="GO" id="GO:0015979">
    <property type="term" value="P:photosynthesis"/>
    <property type="evidence" value="ECO:0007669"/>
    <property type="project" value="UniProtKB-UniRule"/>
</dbReference>
<dbReference type="Gene3D" id="6.10.250.2070">
    <property type="match status" value="1"/>
</dbReference>
<dbReference type="HAMAP" id="MF_01305">
    <property type="entry name" value="PSII_PsbJ"/>
    <property type="match status" value="1"/>
</dbReference>
<dbReference type="InterPro" id="IPR002682">
    <property type="entry name" value="PSII_PsbJ"/>
</dbReference>
<dbReference type="InterPro" id="IPR037267">
    <property type="entry name" value="PSII_PsbJ_sf"/>
</dbReference>
<dbReference type="NCBIfam" id="NF002722">
    <property type="entry name" value="PRK02565.1"/>
    <property type="match status" value="1"/>
</dbReference>
<dbReference type="PANTHER" id="PTHR34812">
    <property type="entry name" value="PHOTOSYSTEM II REACTION CENTER PROTEIN J"/>
    <property type="match status" value="1"/>
</dbReference>
<dbReference type="PANTHER" id="PTHR34812:SF3">
    <property type="entry name" value="PHOTOSYSTEM II REACTION CENTER PROTEIN J"/>
    <property type="match status" value="1"/>
</dbReference>
<dbReference type="Pfam" id="PF01788">
    <property type="entry name" value="PsbJ"/>
    <property type="match status" value="1"/>
</dbReference>
<dbReference type="SUPFAM" id="SSF161021">
    <property type="entry name" value="Photosystem II reaction center protein J, PsbJ"/>
    <property type="match status" value="1"/>
</dbReference>
<keyword id="KW-0150">Chloroplast</keyword>
<keyword id="KW-0472">Membrane</keyword>
<keyword id="KW-0602">Photosynthesis</keyword>
<keyword id="KW-0604">Photosystem II</keyword>
<keyword id="KW-0934">Plastid</keyword>
<keyword id="KW-0674">Reaction center</keyword>
<keyword id="KW-0793">Thylakoid</keyword>
<keyword id="KW-0812">Transmembrane</keyword>
<keyword id="KW-1133">Transmembrane helix</keyword>
<comment type="function">
    <text evidence="1">One of the components of the core complex of photosystem II (PSII). PSII is a light-driven water:plastoquinone oxidoreductase that uses light energy to abstract electrons from H(2)O, generating O(2) and a proton gradient subsequently used for ATP formation. It consists of a core antenna complex that captures photons, and an electron transfer chain that converts photonic excitation into a charge separation.</text>
</comment>
<comment type="subunit">
    <text evidence="1">PSII is composed of 1 copy each of membrane proteins PsbA, PsbB, PsbC, PsbD, PsbE, PsbF, PsbH, PsbI, PsbJ, PsbK, PsbL, PsbM, PsbT, PsbX, PsbY, PsbZ, Psb30/Ycf12, at least 3 peripheral proteins of the oxygen-evolving complex and a large number of cofactors. It forms dimeric complexes.</text>
</comment>
<comment type="subcellular location">
    <subcellularLocation>
        <location evidence="1">Plastid</location>
        <location evidence="1">Chloroplast thylakoid membrane</location>
        <topology evidence="1">Single-pass membrane protein</topology>
    </subcellularLocation>
</comment>
<comment type="similarity">
    <text evidence="1">Belongs to the PsbJ family.</text>
</comment>
<geneLocation type="chloroplast"/>
<reference key="1">
    <citation type="journal article" date="2006" name="BMC Plant Biol.">
        <title>Rapid and accurate pyrosequencing of angiosperm plastid genomes.</title>
        <authorList>
            <person name="Moore M.J."/>
            <person name="Dhingra A."/>
            <person name="Soltis P.S."/>
            <person name="Shaw R."/>
            <person name="Farmerie W.G."/>
            <person name="Folta K.M."/>
            <person name="Soltis D.E."/>
        </authorList>
    </citation>
    <scope>NUCLEOTIDE SEQUENCE [LARGE SCALE GENOMIC DNA]</scope>
</reference>
<organism>
    <name type="scientific">Platanus occidentalis</name>
    <name type="common">Sycamore</name>
    <name type="synonym">American plane tree</name>
    <dbReference type="NCBI Taxonomy" id="4403"/>
    <lineage>
        <taxon>Eukaryota</taxon>
        <taxon>Viridiplantae</taxon>
        <taxon>Streptophyta</taxon>
        <taxon>Embryophyta</taxon>
        <taxon>Tracheophyta</taxon>
        <taxon>Spermatophyta</taxon>
        <taxon>Magnoliopsida</taxon>
        <taxon>Proteales</taxon>
        <taxon>Platanaceae</taxon>
        <taxon>Platanus</taxon>
    </lineage>
</organism>
<name>PSBJ_PLAOC</name>
<evidence type="ECO:0000255" key="1">
    <source>
        <dbReference type="HAMAP-Rule" id="MF_01305"/>
    </source>
</evidence>